<keyword id="KW-0067">ATP-binding</keyword>
<keyword id="KW-0963">Cytoplasm</keyword>
<keyword id="KW-0238">DNA-binding</keyword>
<keyword id="KW-0413">Isomerase</keyword>
<keyword id="KW-0547">Nucleotide-binding</keyword>
<keyword id="KW-1185">Reference proteome</keyword>
<keyword id="KW-0799">Topoisomerase</keyword>
<protein>
    <recommendedName>
        <fullName evidence="1">DNA gyrase subunit A</fullName>
        <ecNumber evidence="1">5.6.2.2</ecNumber>
    </recommendedName>
</protein>
<organism>
    <name type="scientific">Staphylococcus epidermidis (strain ATCC 35984 / DSM 28319 / BCRC 17069 / CCUG 31568 / BM 3577 / RP62A)</name>
    <dbReference type="NCBI Taxonomy" id="176279"/>
    <lineage>
        <taxon>Bacteria</taxon>
        <taxon>Bacillati</taxon>
        <taxon>Bacillota</taxon>
        <taxon>Bacilli</taxon>
        <taxon>Bacillales</taxon>
        <taxon>Staphylococcaceae</taxon>
        <taxon>Staphylococcus</taxon>
    </lineage>
</organism>
<dbReference type="EC" id="5.6.2.2" evidence="1"/>
<dbReference type="EMBL" id="CP000029">
    <property type="protein sequence ID" value="AAW53372.1"/>
    <property type="molecule type" value="Genomic_DNA"/>
</dbReference>
<dbReference type="RefSeq" id="WP_010959373.1">
    <property type="nucleotide sequence ID" value="NC_002976.3"/>
</dbReference>
<dbReference type="SMR" id="Q5HK04"/>
<dbReference type="STRING" id="176279.SERP2548"/>
<dbReference type="ChEMBL" id="CHEMBL2331040"/>
<dbReference type="DrugCentral" id="Q5HK04"/>
<dbReference type="KEGG" id="ser:SERP2548"/>
<dbReference type="eggNOG" id="COG0188">
    <property type="taxonomic scope" value="Bacteria"/>
</dbReference>
<dbReference type="HOGENOM" id="CLU_002977_6_1_9"/>
<dbReference type="PRO" id="PR:Q5HK04"/>
<dbReference type="Proteomes" id="UP000000531">
    <property type="component" value="Chromosome"/>
</dbReference>
<dbReference type="GO" id="GO:0005694">
    <property type="term" value="C:chromosome"/>
    <property type="evidence" value="ECO:0007669"/>
    <property type="project" value="InterPro"/>
</dbReference>
<dbReference type="GO" id="GO:0005737">
    <property type="term" value="C:cytoplasm"/>
    <property type="evidence" value="ECO:0007669"/>
    <property type="project" value="UniProtKB-SubCell"/>
</dbReference>
<dbReference type="GO" id="GO:0009330">
    <property type="term" value="C:DNA topoisomerase type II (double strand cut, ATP-hydrolyzing) complex"/>
    <property type="evidence" value="ECO:0007669"/>
    <property type="project" value="TreeGrafter"/>
</dbReference>
<dbReference type="GO" id="GO:0005524">
    <property type="term" value="F:ATP binding"/>
    <property type="evidence" value="ECO:0007669"/>
    <property type="project" value="UniProtKB-UniRule"/>
</dbReference>
<dbReference type="GO" id="GO:0003677">
    <property type="term" value="F:DNA binding"/>
    <property type="evidence" value="ECO:0007669"/>
    <property type="project" value="UniProtKB-UniRule"/>
</dbReference>
<dbReference type="GO" id="GO:0034335">
    <property type="term" value="F:DNA negative supercoiling activity"/>
    <property type="evidence" value="ECO:0007669"/>
    <property type="project" value="UniProtKB-ARBA"/>
</dbReference>
<dbReference type="GO" id="GO:0006265">
    <property type="term" value="P:DNA topological change"/>
    <property type="evidence" value="ECO:0007669"/>
    <property type="project" value="UniProtKB-UniRule"/>
</dbReference>
<dbReference type="GO" id="GO:0006261">
    <property type="term" value="P:DNA-templated DNA replication"/>
    <property type="evidence" value="ECO:0007669"/>
    <property type="project" value="UniProtKB-UniRule"/>
</dbReference>
<dbReference type="CDD" id="cd00187">
    <property type="entry name" value="TOP4c"/>
    <property type="match status" value="1"/>
</dbReference>
<dbReference type="FunFam" id="1.10.268.10:FF:000001">
    <property type="entry name" value="DNA gyrase subunit A"/>
    <property type="match status" value="1"/>
</dbReference>
<dbReference type="FunFam" id="2.120.10.90:FF:000004">
    <property type="entry name" value="DNA gyrase subunit A"/>
    <property type="match status" value="1"/>
</dbReference>
<dbReference type="FunFam" id="3.30.1360.40:FF:000002">
    <property type="entry name" value="DNA gyrase subunit A"/>
    <property type="match status" value="1"/>
</dbReference>
<dbReference type="FunFam" id="3.90.199.10:FF:000001">
    <property type="entry name" value="DNA gyrase subunit A"/>
    <property type="match status" value="1"/>
</dbReference>
<dbReference type="Gene3D" id="3.30.1360.40">
    <property type="match status" value="1"/>
</dbReference>
<dbReference type="Gene3D" id="2.120.10.90">
    <property type="entry name" value="DNA gyrase/topoisomerase IV, subunit A, C-terminal"/>
    <property type="match status" value="1"/>
</dbReference>
<dbReference type="Gene3D" id="3.90.199.10">
    <property type="entry name" value="Topoisomerase II, domain 5"/>
    <property type="match status" value="1"/>
</dbReference>
<dbReference type="Gene3D" id="1.10.268.10">
    <property type="entry name" value="Topoisomerase, domain 3"/>
    <property type="match status" value="1"/>
</dbReference>
<dbReference type="HAMAP" id="MF_01897">
    <property type="entry name" value="GyrA"/>
    <property type="match status" value="1"/>
</dbReference>
<dbReference type="InterPro" id="IPR005743">
    <property type="entry name" value="GyrA"/>
</dbReference>
<dbReference type="InterPro" id="IPR006691">
    <property type="entry name" value="GyrA/parC_rep"/>
</dbReference>
<dbReference type="InterPro" id="IPR035516">
    <property type="entry name" value="Gyrase/topoIV_suA_C"/>
</dbReference>
<dbReference type="InterPro" id="IPR013760">
    <property type="entry name" value="Topo_IIA-like_dom_sf"/>
</dbReference>
<dbReference type="InterPro" id="IPR013758">
    <property type="entry name" value="Topo_IIA_A/C_ab"/>
</dbReference>
<dbReference type="InterPro" id="IPR013757">
    <property type="entry name" value="Topo_IIA_A_a_sf"/>
</dbReference>
<dbReference type="InterPro" id="IPR002205">
    <property type="entry name" value="Topo_IIA_dom_A"/>
</dbReference>
<dbReference type="InterPro" id="IPR050220">
    <property type="entry name" value="Type_II_DNA_Topoisomerases"/>
</dbReference>
<dbReference type="NCBIfam" id="TIGR01063">
    <property type="entry name" value="gyrA"/>
    <property type="match status" value="1"/>
</dbReference>
<dbReference type="NCBIfam" id="NF004043">
    <property type="entry name" value="PRK05560.1"/>
    <property type="match status" value="1"/>
</dbReference>
<dbReference type="NCBIfam" id="NF004044">
    <property type="entry name" value="PRK05561.1"/>
    <property type="match status" value="1"/>
</dbReference>
<dbReference type="PANTHER" id="PTHR43493:SF5">
    <property type="entry name" value="DNA GYRASE SUBUNIT A, CHLOROPLASTIC_MITOCHONDRIAL"/>
    <property type="match status" value="1"/>
</dbReference>
<dbReference type="PANTHER" id="PTHR43493">
    <property type="entry name" value="DNA GYRASE/TOPOISOMERASE SUBUNIT A"/>
    <property type="match status" value="1"/>
</dbReference>
<dbReference type="Pfam" id="PF03989">
    <property type="entry name" value="DNA_gyraseA_C"/>
    <property type="match status" value="6"/>
</dbReference>
<dbReference type="Pfam" id="PF00521">
    <property type="entry name" value="DNA_topoisoIV"/>
    <property type="match status" value="1"/>
</dbReference>
<dbReference type="SMART" id="SM00434">
    <property type="entry name" value="TOP4c"/>
    <property type="match status" value="1"/>
</dbReference>
<dbReference type="SUPFAM" id="SSF101904">
    <property type="entry name" value="GyrA/ParC C-terminal domain-like"/>
    <property type="match status" value="1"/>
</dbReference>
<dbReference type="SUPFAM" id="SSF56719">
    <property type="entry name" value="Type II DNA topoisomerase"/>
    <property type="match status" value="1"/>
</dbReference>
<dbReference type="PROSITE" id="PS52040">
    <property type="entry name" value="TOPO_IIA"/>
    <property type="match status" value="1"/>
</dbReference>
<sequence length="893" mass="100144">MAELPQSRINERNITSEMRESFLDYAMSVIVSRALPDVRDGLKPVHRRILYGLNEQGMTPDKPYKKSARIVGDVMGKYHPHGDSSIYEAMVRMAQDFSYRYPLVDGQGNFGSMDGDGAAAMRYTEARMTKITLELLRDINKDTIDFIDNYDGNEREPSVLPARFPNLLVNGAAGIAVGMATNIPPHNLTEVIDGVLSLSKNPDITINELMEDIQGPDFPTAGLVLGKSGIRRAYETGRGSIQMRSRAEIEERGGGRQRIVVTEIPFQVNKARMIEKIAELVRDKKIDGITDLRDETSLRTGVRVVIDVRKDANASVILNNLYKQTPLQTSFGVNMIALVNSRPKLINLKEALIHYLEHQKTVVRRRTEYNLKKARDRAHILEGLRIALDHIDEIITTIRESDTDKIAMASLQERFKLTERQAQAILDMRLRRLTGLERDKIESEYNELLEYIKELEEILADEEVLLQLVRDELTEIKERFGDERRTEIQLGGLEDLEDEDLIPEEQIVITLSHNNYIKRLPVSTYRSQNRGGRGIQGMNTLDEDFVSQLVTMSTHDHVLFFTNKGRVYKLKGYEVPELSRQSKGIPIINAIELENDETISTMIAVKDLESEEDYLVFATKQGIVKRSSLSNFSRINKNGKIAINFKEDDELIAVRLTTGNEDILIGTAHASLIRFSESTLRPLGRTAAGVKGISLREGDTVVGLDVADSESEDEVLVVTENGYGKRTPVSEYRLSNRGGKGIKTATITERNGNIVCITTVTGEEDLMVVTNAGVIIRLDVHDISQNGRAAQGVRLMKLGDGQFVSTVAKVNEEDDNEENADEAQQSTTTETADVEEVVDDQTPGNAIHTEGDAEMESVESPENDDRIDIRQDFMDRVNEDIESASDNEEDSDE</sequence>
<comment type="function">
    <text evidence="1">A type II topoisomerase that negatively supercoils closed circular double-stranded (ds) DNA in an ATP-dependent manner to modulate DNA topology and maintain chromosomes in an underwound state. Negative supercoiling favors strand separation, and DNA replication, transcription, recombination and repair, all of which involve strand separation. Also able to catalyze the interconversion of other topological isomers of dsDNA rings, including catenanes and knotted rings. Type II topoisomerases break and join 2 DNA strands simultaneously in an ATP-dependent manner.</text>
</comment>
<comment type="catalytic activity">
    <reaction evidence="1">
        <text>ATP-dependent breakage, passage and rejoining of double-stranded DNA.</text>
        <dbReference type="EC" id="5.6.2.2"/>
    </reaction>
</comment>
<comment type="subunit">
    <text evidence="1">Heterotetramer, composed of two GyrA and two GyrB chains. In the heterotetramer, GyrA contains the active site tyrosine that forms a transient covalent intermediate with DNA, while GyrB binds cofactors and catalyzes ATP hydrolysis.</text>
</comment>
<comment type="subcellular location">
    <subcellularLocation>
        <location evidence="1">Cytoplasm</location>
    </subcellularLocation>
</comment>
<comment type="miscellaneous">
    <text evidence="1">Few gyrases are as efficient as E.coli at forming negative supercoils. Not all organisms have 2 type II topoisomerases; in organisms with a single type II topoisomerase this enzyme also has to decatenate newly replicated chromosomes.</text>
</comment>
<comment type="similarity">
    <text evidence="1">Belongs to the type II topoisomerase GyrA/ParC subunit family.</text>
</comment>
<feature type="chain" id="PRO_0000145260" description="DNA gyrase subunit A">
    <location>
        <begin position="1"/>
        <end position="893"/>
    </location>
</feature>
<feature type="domain" description="Topo IIA-type catalytic" evidence="2">
    <location>
        <begin position="35"/>
        <end position="501"/>
    </location>
</feature>
<feature type="region of interest" description="Disordered" evidence="3">
    <location>
        <begin position="810"/>
        <end position="893"/>
    </location>
</feature>
<feature type="short sequence motif" description="GyrA-box" evidence="1">
    <location>
        <begin position="528"/>
        <end position="534"/>
    </location>
</feature>
<feature type="compositionally biased region" description="Acidic residues" evidence="3">
    <location>
        <begin position="812"/>
        <end position="821"/>
    </location>
</feature>
<feature type="compositionally biased region" description="Acidic residues" evidence="3">
    <location>
        <begin position="852"/>
        <end position="862"/>
    </location>
</feature>
<feature type="compositionally biased region" description="Basic and acidic residues" evidence="3">
    <location>
        <begin position="863"/>
        <end position="879"/>
    </location>
</feature>
<feature type="compositionally biased region" description="Acidic residues" evidence="3">
    <location>
        <begin position="880"/>
        <end position="893"/>
    </location>
</feature>
<feature type="active site" description="O-(5'-phospho-DNA)-tyrosine intermediate" evidence="1">
    <location>
        <position position="123"/>
    </location>
</feature>
<accession>Q5HK04</accession>
<gene>
    <name evidence="1" type="primary">gyrA</name>
    <name type="ordered locus">SERP2548</name>
</gene>
<evidence type="ECO:0000255" key="1">
    <source>
        <dbReference type="HAMAP-Rule" id="MF_01897"/>
    </source>
</evidence>
<evidence type="ECO:0000255" key="2">
    <source>
        <dbReference type="PROSITE-ProRule" id="PRU01384"/>
    </source>
</evidence>
<evidence type="ECO:0000256" key="3">
    <source>
        <dbReference type="SAM" id="MobiDB-lite"/>
    </source>
</evidence>
<reference key="1">
    <citation type="journal article" date="2005" name="J. Bacteriol.">
        <title>Insights on evolution of virulence and resistance from the complete genome analysis of an early methicillin-resistant Staphylococcus aureus strain and a biofilm-producing methicillin-resistant Staphylococcus epidermidis strain.</title>
        <authorList>
            <person name="Gill S.R."/>
            <person name="Fouts D.E."/>
            <person name="Archer G.L."/>
            <person name="Mongodin E.F."/>
            <person name="DeBoy R.T."/>
            <person name="Ravel J."/>
            <person name="Paulsen I.T."/>
            <person name="Kolonay J.F."/>
            <person name="Brinkac L.M."/>
            <person name="Beanan M.J."/>
            <person name="Dodson R.J."/>
            <person name="Daugherty S.C."/>
            <person name="Madupu R."/>
            <person name="Angiuoli S.V."/>
            <person name="Durkin A.S."/>
            <person name="Haft D.H."/>
            <person name="Vamathevan J.J."/>
            <person name="Khouri H."/>
            <person name="Utterback T.R."/>
            <person name="Lee C."/>
            <person name="Dimitrov G."/>
            <person name="Jiang L."/>
            <person name="Qin H."/>
            <person name="Weidman J."/>
            <person name="Tran K."/>
            <person name="Kang K.H."/>
            <person name="Hance I.R."/>
            <person name="Nelson K.E."/>
            <person name="Fraser C.M."/>
        </authorList>
    </citation>
    <scope>NUCLEOTIDE SEQUENCE [LARGE SCALE GENOMIC DNA]</scope>
    <source>
        <strain>ATCC 35984 / DSM 28319 / BCRC 17069 / CCUG 31568 / BM 3577 / RP62A</strain>
    </source>
</reference>
<name>GYRA_STAEQ</name>
<proteinExistence type="inferred from homology"/>